<name>QUEC_BACAH</name>
<comment type="function">
    <text evidence="1">Catalyzes the ATP-dependent conversion of 7-carboxy-7-deazaguanine (CDG) to 7-cyano-7-deazaguanine (preQ(0)).</text>
</comment>
<comment type="catalytic activity">
    <reaction evidence="1">
        <text>7-carboxy-7-deazaguanine + NH4(+) + ATP = 7-cyano-7-deazaguanine + ADP + phosphate + H2O + H(+)</text>
        <dbReference type="Rhea" id="RHEA:27982"/>
        <dbReference type="ChEBI" id="CHEBI:15377"/>
        <dbReference type="ChEBI" id="CHEBI:15378"/>
        <dbReference type="ChEBI" id="CHEBI:28938"/>
        <dbReference type="ChEBI" id="CHEBI:30616"/>
        <dbReference type="ChEBI" id="CHEBI:43474"/>
        <dbReference type="ChEBI" id="CHEBI:45075"/>
        <dbReference type="ChEBI" id="CHEBI:61036"/>
        <dbReference type="ChEBI" id="CHEBI:456216"/>
        <dbReference type="EC" id="6.3.4.20"/>
    </reaction>
</comment>
<comment type="cofactor">
    <cofactor evidence="1">
        <name>Zn(2+)</name>
        <dbReference type="ChEBI" id="CHEBI:29105"/>
    </cofactor>
    <text evidence="1">Binds 1 zinc ion per subunit.</text>
</comment>
<comment type="pathway">
    <text evidence="1">Purine metabolism; 7-cyano-7-deazaguanine biosynthesis.</text>
</comment>
<comment type="subunit">
    <text evidence="1">Homodimer.</text>
</comment>
<comment type="similarity">
    <text evidence="1">Belongs to the QueC family.</text>
</comment>
<comment type="sequence caution" evidence="2">
    <conflict type="erroneous initiation">
        <sequence resource="EMBL-CDS" id="ABK84554"/>
    </conflict>
</comment>
<protein>
    <recommendedName>
        <fullName evidence="1">7-cyano-7-deazaguanine synthase</fullName>
        <ecNumber evidence="1">6.3.4.20</ecNumber>
    </recommendedName>
    <alternativeName>
        <fullName evidence="1">7-cyano-7-carbaguanine synthase</fullName>
    </alternativeName>
    <alternativeName>
        <fullName evidence="1">PreQ(0) synthase</fullName>
    </alternativeName>
    <alternativeName>
        <fullName evidence="1">Queuosine biosynthesis protein QueC</fullName>
    </alternativeName>
</protein>
<dbReference type="EC" id="6.3.4.20" evidence="1"/>
<dbReference type="EMBL" id="CP000485">
    <property type="protein sequence ID" value="ABK84554.1"/>
    <property type="status" value="ALT_INIT"/>
    <property type="molecule type" value="Genomic_DNA"/>
</dbReference>
<dbReference type="RefSeq" id="WP_000711596.1">
    <property type="nucleotide sequence ID" value="NC_008600.1"/>
</dbReference>
<dbReference type="SMR" id="A0RBG1"/>
<dbReference type="GeneID" id="93009699"/>
<dbReference type="KEGG" id="btl:BALH_1202"/>
<dbReference type="HOGENOM" id="CLU_081854_0_0_9"/>
<dbReference type="UniPathway" id="UPA00391"/>
<dbReference type="GO" id="GO:0005524">
    <property type="term" value="F:ATP binding"/>
    <property type="evidence" value="ECO:0007669"/>
    <property type="project" value="UniProtKB-UniRule"/>
</dbReference>
<dbReference type="GO" id="GO:0016879">
    <property type="term" value="F:ligase activity, forming carbon-nitrogen bonds"/>
    <property type="evidence" value="ECO:0007669"/>
    <property type="project" value="UniProtKB-UniRule"/>
</dbReference>
<dbReference type="GO" id="GO:0008270">
    <property type="term" value="F:zinc ion binding"/>
    <property type="evidence" value="ECO:0007669"/>
    <property type="project" value="UniProtKB-UniRule"/>
</dbReference>
<dbReference type="GO" id="GO:0008616">
    <property type="term" value="P:queuosine biosynthetic process"/>
    <property type="evidence" value="ECO:0007669"/>
    <property type="project" value="UniProtKB-UniRule"/>
</dbReference>
<dbReference type="CDD" id="cd01995">
    <property type="entry name" value="QueC-like"/>
    <property type="match status" value="1"/>
</dbReference>
<dbReference type="FunFam" id="3.40.50.620:FF:000017">
    <property type="entry name" value="7-cyano-7-deazaguanine synthase"/>
    <property type="match status" value="1"/>
</dbReference>
<dbReference type="Gene3D" id="3.40.50.620">
    <property type="entry name" value="HUPs"/>
    <property type="match status" value="1"/>
</dbReference>
<dbReference type="HAMAP" id="MF_01633">
    <property type="entry name" value="QueC"/>
    <property type="match status" value="1"/>
</dbReference>
<dbReference type="InterPro" id="IPR018317">
    <property type="entry name" value="QueC"/>
</dbReference>
<dbReference type="InterPro" id="IPR014729">
    <property type="entry name" value="Rossmann-like_a/b/a_fold"/>
</dbReference>
<dbReference type="NCBIfam" id="TIGR00364">
    <property type="entry name" value="7-cyano-7-deazaguanine synthase QueC"/>
    <property type="match status" value="1"/>
</dbReference>
<dbReference type="PANTHER" id="PTHR42914">
    <property type="entry name" value="7-CYANO-7-DEAZAGUANINE SYNTHASE"/>
    <property type="match status" value="1"/>
</dbReference>
<dbReference type="PANTHER" id="PTHR42914:SF1">
    <property type="entry name" value="7-CYANO-7-DEAZAGUANINE SYNTHASE"/>
    <property type="match status" value="1"/>
</dbReference>
<dbReference type="Pfam" id="PF06508">
    <property type="entry name" value="QueC"/>
    <property type="match status" value="1"/>
</dbReference>
<dbReference type="PIRSF" id="PIRSF006293">
    <property type="entry name" value="ExsB"/>
    <property type="match status" value="1"/>
</dbReference>
<dbReference type="SUPFAM" id="SSF52402">
    <property type="entry name" value="Adenine nucleotide alpha hydrolases-like"/>
    <property type="match status" value="1"/>
</dbReference>
<gene>
    <name evidence="1" type="primary">queC</name>
    <name type="ordered locus">BALH_1202</name>
</gene>
<feature type="chain" id="PRO_0000336895" description="7-cyano-7-deazaguanine synthase">
    <location>
        <begin position="1"/>
        <end position="220"/>
    </location>
</feature>
<feature type="binding site" evidence="1">
    <location>
        <begin position="10"/>
        <end position="20"/>
    </location>
    <ligand>
        <name>ATP</name>
        <dbReference type="ChEBI" id="CHEBI:30616"/>
    </ligand>
</feature>
<feature type="binding site" evidence="1">
    <location>
        <position position="186"/>
    </location>
    <ligand>
        <name>Zn(2+)</name>
        <dbReference type="ChEBI" id="CHEBI:29105"/>
    </ligand>
</feature>
<feature type="binding site" evidence="1">
    <location>
        <position position="195"/>
    </location>
    <ligand>
        <name>Zn(2+)</name>
        <dbReference type="ChEBI" id="CHEBI:29105"/>
    </ligand>
</feature>
<feature type="binding site" evidence="1">
    <location>
        <position position="198"/>
    </location>
    <ligand>
        <name>Zn(2+)</name>
        <dbReference type="ChEBI" id="CHEBI:29105"/>
    </ligand>
</feature>
<feature type="binding site" evidence="1">
    <location>
        <position position="201"/>
    </location>
    <ligand>
        <name>Zn(2+)</name>
        <dbReference type="ChEBI" id="CHEBI:29105"/>
    </ligand>
</feature>
<reference key="1">
    <citation type="journal article" date="2007" name="J. Bacteriol.">
        <title>The complete genome sequence of Bacillus thuringiensis Al Hakam.</title>
        <authorList>
            <person name="Challacombe J.F."/>
            <person name="Altherr M.R."/>
            <person name="Xie G."/>
            <person name="Bhotika S.S."/>
            <person name="Brown N."/>
            <person name="Bruce D."/>
            <person name="Campbell C.S."/>
            <person name="Campbell M.L."/>
            <person name="Chen J."/>
            <person name="Chertkov O."/>
            <person name="Cleland C."/>
            <person name="Dimitrijevic M."/>
            <person name="Doggett N.A."/>
            <person name="Fawcett J.J."/>
            <person name="Glavina T."/>
            <person name="Goodwin L.A."/>
            <person name="Green L.D."/>
            <person name="Han C.S."/>
            <person name="Hill K.K."/>
            <person name="Hitchcock P."/>
            <person name="Jackson P.J."/>
            <person name="Keim P."/>
            <person name="Kewalramani A.R."/>
            <person name="Longmire J."/>
            <person name="Lucas S."/>
            <person name="Malfatti S."/>
            <person name="Martinez D."/>
            <person name="McMurry K."/>
            <person name="Meincke L.J."/>
            <person name="Misra M."/>
            <person name="Moseman B.L."/>
            <person name="Mundt M."/>
            <person name="Munk A.C."/>
            <person name="Okinaka R.T."/>
            <person name="Parson-Quintana B."/>
            <person name="Reilly L.P."/>
            <person name="Richardson P."/>
            <person name="Robinson D.L."/>
            <person name="Saunders E."/>
            <person name="Tapia R."/>
            <person name="Tesmer J.G."/>
            <person name="Thayer N."/>
            <person name="Thompson L.S."/>
            <person name="Tice H."/>
            <person name="Ticknor L.O."/>
            <person name="Wills P.L."/>
            <person name="Gilna P."/>
            <person name="Brettin T.S."/>
        </authorList>
    </citation>
    <scope>NUCLEOTIDE SEQUENCE [LARGE SCALE GENOMIC DNA]</scope>
    <source>
        <strain>Al Hakam</strain>
    </source>
</reference>
<organism>
    <name type="scientific">Bacillus thuringiensis (strain Al Hakam)</name>
    <dbReference type="NCBI Taxonomy" id="412694"/>
    <lineage>
        <taxon>Bacteria</taxon>
        <taxon>Bacillati</taxon>
        <taxon>Bacillota</taxon>
        <taxon>Bacilli</taxon>
        <taxon>Bacillales</taxon>
        <taxon>Bacillaceae</taxon>
        <taxon>Bacillus</taxon>
        <taxon>Bacillus cereus group</taxon>
    </lineage>
</organism>
<sequence length="220" mass="24513">MKKEKAVVVFSGGQDSTTCLFWAIEQFAEVEAVTFNYNQRHKLEIDCAAEIAKELGIKHTVLDMSLLNQLAPNALTRTDMEITHEEGELPSTFVDGRNLLFLSFAAVLAKQVGARHIVTGVCETDFSGYPDCRDVFVKSLNVTLNLSMDYPFVIHTPLMWIDKAETWKLSDELGAFEFVREKTLTCYNGIIGDGCGECPACQLRKAGLDTYLQEREGASN</sequence>
<keyword id="KW-0067">ATP-binding</keyword>
<keyword id="KW-0436">Ligase</keyword>
<keyword id="KW-0479">Metal-binding</keyword>
<keyword id="KW-0547">Nucleotide-binding</keyword>
<keyword id="KW-0671">Queuosine biosynthesis</keyword>
<keyword id="KW-0862">Zinc</keyword>
<evidence type="ECO:0000255" key="1">
    <source>
        <dbReference type="HAMAP-Rule" id="MF_01633"/>
    </source>
</evidence>
<evidence type="ECO:0000305" key="2"/>
<proteinExistence type="inferred from homology"/>
<accession>A0RBG1</accession>